<protein>
    <recommendedName>
        <fullName evidence="1">Probable nicotinate-nucleotide adenylyltransferase</fullName>
        <ecNumber evidence="1">2.7.7.18</ecNumber>
    </recommendedName>
    <alternativeName>
        <fullName evidence="1">Deamido-NAD(+) diphosphorylase</fullName>
    </alternativeName>
    <alternativeName>
        <fullName evidence="1">Deamido-NAD(+) pyrophosphorylase</fullName>
    </alternativeName>
    <alternativeName>
        <fullName evidence="1">Nicotinate mononucleotide adenylyltransferase</fullName>
        <shortName evidence="1">NaMN adenylyltransferase</shortName>
    </alternativeName>
</protein>
<sequence>MKIGLMGGTFNPIHMAHLRIAEEARELCGLDRVLFIPVADPPHKPLAGEVPFHQRCQMVRLAIAGNRAFELSEIEGQRPGKSYSIDTIGTFREQHPQAELYFIIGSDSFLELGLWRRYADILRSCNLIVVERPGRQVNDPLSALPVDIRGELRYTPASRSLEHVGGTRVHFFAGCLLDISSSEIRRLAATGRSITYLVPPQVEAYIKEQRIYSECP</sequence>
<proteinExistence type="inferred from homology"/>
<reference key="1">
    <citation type="submission" date="2006-10" db="EMBL/GenBank/DDBJ databases">
        <title>Complete sequence of chromosome of Pelobacter propionicus DSM 2379.</title>
        <authorList>
            <consortium name="US DOE Joint Genome Institute"/>
            <person name="Copeland A."/>
            <person name="Lucas S."/>
            <person name="Lapidus A."/>
            <person name="Barry K."/>
            <person name="Detter J.C."/>
            <person name="Glavina del Rio T."/>
            <person name="Hammon N."/>
            <person name="Israni S."/>
            <person name="Dalin E."/>
            <person name="Tice H."/>
            <person name="Pitluck S."/>
            <person name="Saunders E."/>
            <person name="Brettin T."/>
            <person name="Bruce D."/>
            <person name="Han C."/>
            <person name="Tapia R."/>
            <person name="Schmutz J."/>
            <person name="Larimer F."/>
            <person name="Land M."/>
            <person name="Hauser L."/>
            <person name="Kyrpides N."/>
            <person name="Kim E."/>
            <person name="Lovley D."/>
            <person name="Richardson P."/>
        </authorList>
    </citation>
    <scope>NUCLEOTIDE SEQUENCE [LARGE SCALE GENOMIC DNA]</scope>
    <source>
        <strain>DSM 2379 / NBRC 103807 / OttBd1</strain>
    </source>
</reference>
<dbReference type="EC" id="2.7.7.18" evidence="1"/>
<dbReference type="EMBL" id="CP000482">
    <property type="protein sequence ID" value="ABL01206.1"/>
    <property type="status" value="ALT_INIT"/>
    <property type="molecule type" value="Genomic_DNA"/>
</dbReference>
<dbReference type="RefSeq" id="WP_041532990.1">
    <property type="nucleotide sequence ID" value="NC_008609.1"/>
</dbReference>
<dbReference type="SMR" id="A1AV35"/>
<dbReference type="STRING" id="338966.Ppro_3614"/>
<dbReference type="KEGG" id="ppd:Ppro_3614"/>
<dbReference type="eggNOG" id="COG1057">
    <property type="taxonomic scope" value="Bacteria"/>
</dbReference>
<dbReference type="HOGENOM" id="CLU_069765_0_1_7"/>
<dbReference type="OrthoDB" id="5295945at2"/>
<dbReference type="UniPathway" id="UPA00253">
    <property type="reaction ID" value="UER00332"/>
</dbReference>
<dbReference type="Proteomes" id="UP000006732">
    <property type="component" value="Chromosome"/>
</dbReference>
<dbReference type="GO" id="GO:0005524">
    <property type="term" value="F:ATP binding"/>
    <property type="evidence" value="ECO:0007669"/>
    <property type="project" value="UniProtKB-KW"/>
</dbReference>
<dbReference type="GO" id="GO:0004515">
    <property type="term" value="F:nicotinate-nucleotide adenylyltransferase activity"/>
    <property type="evidence" value="ECO:0007669"/>
    <property type="project" value="UniProtKB-UniRule"/>
</dbReference>
<dbReference type="GO" id="GO:0009435">
    <property type="term" value="P:NAD biosynthetic process"/>
    <property type="evidence" value="ECO:0007669"/>
    <property type="project" value="UniProtKB-UniRule"/>
</dbReference>
<dbReference type="CDD" id="cd02165">
    <property type="entry name" value="NMNAT"/>
    <property type="match status" value="1"/>
</dbReference>
<dbReference type="Gene3D" id="3.40.50.620">
    <property type="entry name" value="HUPs"/>
    <property type="match status" value="1"/>
</dbReference>
<dbReference type="HAMAP" id="MF_00244">
    <property type="entry name" value="NaMN_adenylyltr"/>
    <property type="match status" value="1"/>
</dbReference>
<dbReference type="InterPro" id="IPR004821">
    <property type="entry name" value="Cyt_trans-like"/>
</dbReference>
<dbReference type="InterPro" id="IPR005248">
    <property type="entry name" value="NadD/NMNAT"/>
</dbReference>
<dbReference type="InterPro" id="IPR014729">
    <property type="entry name" value="Rossmann-like_a/b/a_fold"/>
</dbReference>
<dbReference type="NCBIfam" id="TIGR00125">
    <property type="entry name" value="cyt_tran_rel"/>
    <property type="match status" value="1"/>
</dbReference>
<dbReference type="NCBIfam" id="TIGR00482">
    <property type="entry name" value="nicotinate (nicotinamide) nucleotide adenylyltransferase"/>
    <property type="match status" value="1"/>
</dbReference>
<dbReference type="NCBIfam" id="NF000840">
    <property type="entry name" value="PRK00071.1-3"/>
    <property type="match status" value="1"/>
</dbReference>
<dbReference type="PANTHER" id="PTHR39321">
    <property type="entry name" value="NICOTINATE-NUCLEOTIDE ADENYLYLTRANSFERASE-RELATED"/>
    <property type="match status" value="1"/>
</dbReference>
<dbReference type="PANTHER" id="PTHR39321:SF3">
    <property type="entry name" value="PHOSPHOPANTETHEINE ADENYLYLTRANSFERASE"/>
    <property type="match status" value="1"/>
</dbReference>
<dbReference type="Pfam" id="PF01467">
    <property type="entry name" value="CTP_transf_like"/>
    <property type="match status" value="1"/>
</dbReference>
<dbReference type="SUPFAM" id="SSF52374">
    <property type="entry name" value="Nucleotidylyl transferase"/>
    <property type="match status" value="1"/>
</dbReference>
<comment type="function">
    <text evidence="1">Catalyzes the reversible adenylation of nicotinate mononucleotide (NaMN) to nicotinic acid adenine dinucleotide (NaAD).</text>
</comment>
<comment type="catalytic activity">
    <reaction evidence="1">
        <text>nicotinate beta-D-ribonucleotide + ATP + H(+) = deamido-NAD(+) + diphosphate</text>
        <dbReference type="Rhea" id="RHEA:22860"/>
        <dbReference type="ChEBI" id="CHEBI:15378"/>
        <dbReference type="ChEBI" id="CHEBI:30616"/>
        <dbReference type="ChEBI" id="CHEBI:33019"/>
        <dbReference type="ChEBI" id="CHEBI:57502"/>
        <dbReference type="ChEBI" id="CHEBI:58437"/>
        <dbReference type="EC" id="2.7.7.18"/>
    </reaction>
</comment>
<comment type="pathway">
    <text evidence="1">Cofactor biosynthesis; NAD(+) biosynthesis; deamido-NAD(+) from nicotinate D-ribonucleotide: step 1/1.</text>
</comment>
<comment type="similarity">
    <text evidence="1">Belongs to the NadD family.</text>
</comment>
<comment type="sequence caution" evidence="2">
    <conflict type="erroneous initiation">
        <sequence resource="EMBL-CDS" id="ABL01206"/>
    </conflict>
</comment>
<organism>
    <name type="scientific">Pelobacter propionicus (strain DSM 2379 / NBRC 103807 / OttBd1)</name>
    <dbReference type="NCBI Taxonomy" id="338966"/>
    <lineage>
        <taxon>Bacteria</taxon>
        <taxon>Pseudomonadati</taxon>
        <taxon>Thermodesulfobacteriota</taxon>
        <taxon>Desulfuromonadia</taxon>
        <taxon>Desulfuromonadales</taxon>
        <taxon>Desulfuromonadaceae</taxon>
        <taxon>Pelobacter</taxon>
    </lineage>
</organism>
<name>NADD_PELPD</name>
<gene>
    <name evidence="1" type="primary">nadD</name>
    <name type="ordered locus">Ppro_3614</name>
</gene>
<feature type="chain" id="PRO_0000336718" description="Probable nicotinate-nucleotide adenylyltransferase">
    <location>
        <begin position="1"/>
        <end position="216"/>
    </location>
</feature>
<keyword id="KW-0067">ATP-binding</keyword>
<keyword id="KW-0520">NAD</keyword>
<keyword id="KW-0547">Nucleotide-binding</keyword>
<keyword id="KW-0548">Nucleotidyltransferase</keyword>
<keyword id="KW-0662">Pyridine nucleotide biosynthesis</keyword>
<keyword id="KW-1185">Reference proteome</keyword>
<keyword id="KW-0808">Transferase</keyword>
<accession>A1AV35</accession>
<evidence type="ECO:0000255" key="1">
    <source>
        <dbReference type="HAMAP-Rule" id="MF_00244"/>
    </source>
</evidence>
<evidence type="ECO:0000305" key="2"/>